<feature type="chain" id="PRO_1000071866" description="Lysine--tRNA ligase">
    <location>
        <begin position="1"/>
        <end position="501"/>
    </location>
</feature>
<feature type="binding site" evidence="1">
    <location>
        <position position="404"/>
    </location>
    <ligand>
        <name>Mg(2+)</name>
        <dbReference type="ChEBI" id="CHEBI:18420"/>
        <label>1</label>
    </ligand>
</feature>
<feature type="binding site" evidence="1">
    <location>
        <position position="411"/>
    </location>
    <ligand>
        <name>Mg(2+)</name>
        <dbReference type="ChEBI" id="CHEBI:18420"/>
        <label>1</label>
    </ligand>
</feature>
<feature type="binding site" evidence="1">
    <location>
        <position position="411"/>
    </location>
    <ligand>
        <name>Mg(2+)</name>
        <dbReference type="ChEBI" id="CHEBI:18420"/>
        <label>2</label>
    </ligand>
</feature>
<accession>A8FKI8</accession>
<dbReference type="EC" id="6.1.1.6" evidence="1"/>
<dbReference type="EMBL" id="CP000814">
    <property type="protein sequence ID" value="ABV51975.1"/>
    <property type="molecule type" value="Genomic_DNA"/>
</dbReference>
<dbReference type="RefSeq" id="WP_002854385.1">
    <property type="nucleotide sequence ID" value="NC_009839.1"/>
</dbReference>
<dbReference type="SMR" id="A8FKI8"/>
<dbReference type="KEGG" id="cju:C8J_0376"/>
<dbReference type="HOGENOM" id="CLU_008255_6_0_7"/>
<dbReference type="GO" id="GO:0005829">
    <property type="term" value="C:cytosol"/>
    <property type="evidence" value="ECO:0007669"/>
    <property type="project" value="TreeGrafter"/>
</dbReference>
<dbReference type="GO" id="GO:0005524">
    <property type="term" value="F:ATP binding"/>
    <property type="evidence" value="ECO:0007669"/>
    <property type="project" value="UniProtKB-UniRule"/>
</dbReference>
<dbReference type="GO" id="GO:0004824">
    <property type="term" value="F:lysine-tRNA ligase activity"/>
    <property type="evidence" value="ECO:0007669"/>
    <property type="project" value="UniProtKB-UniRule"/>
</dbReference>
<dbReference type="GO" id="GO:0000287">
    <property type="term" value="F:magnesium ion binding"/>
    <property type="evidence" value="ECO:0007669"/>
    <property type="project" value="UniProtKB-UniRule"/>
</dbReference>
<dbReference type="GO" id="GO:0000049">
    <property type="term" value="F:tRNA binding"/>
    <property type="evidence" value="ECO:0007669"/>
    <property type="project" value="TreeGrafter"/>
</dbReference>
<dbReference type="GO" id="GO:0006430">
    <property type="term" value="P:lysyl-tRNA aminoacylation"/>
    <property type="evidence" value="ECO:0007669"/>
    <property type="project" value="UniProtKB-UniRule"/>
</dbReference>
<dbReference type="CDD" id="cd00775">
    <property type="entry name" value="LysRS_core"/>
    <property type="match status" value="1"/>
</dbReference>
<dbReference type="CDD" id="cd04322">
    <property type="entry name" value="LysRS_N"/>
    <property type="match status" value="1"/>
</dbReference>
<dbReference type="Gene3D" id="3.30.930.10">
    <property type="entry name" value="Bira Bifunctional Protein, Domain 2"/>
    <property type="match status" value="1"/>
</dbReference>
<dbReference type="Gene3D" id="2.40.50.140">
    <property type="entry name" value="Nucleic acid-binding proteins"/>
    <property type="match status" value="1"/>
</dbReference>
<dbReference type="HAMAP" id="MF_00252">
    <property type="entry name" value="Lys_tRNA_synth_class2"/>
    <property type="match status" value="1"/>
</dbReference>
<dbReference type="InterPro" id="IPR004364">
    <property type="entry name" value="Aa-tRNA-synt_II"/>
</dbReference>
<dbReference type="InterPro" id="IPR006195">
    <property type="entry name" value="aa-tRNA-synth_II"/>
</dbReference>
<dbReference type="InterPro" id="IPR045864">
    <property type="entry name" value="aa-tRNA-synth_II/BPL/LPL"/>
</dbReference>
<dbReference type="InterPro" id="IPR002313">
    <property type="entry name" value="Lys-tRNA-ligase_II"/>
</dbReference>
<dbReference type="InterPro" id="IPR044136">
    <property type="entry name" value="Lys-tRNA-ligase_II_N"/>
</dbReference>
<dbReference type="InterPro" id="IPR018149">
    <property type="entry name" value="Lys-tRNA-synth_II_C"/>
</dbReference>
<dbReference type="InterPro" id="IPR012340">
    <property type="entry name" value="NA-bd_OB-fold"/>
</dbReference>
<dbReference type="InterPro" id="IPR004365">
    <property type="entry name" value="NA-bd_OB_tRNA"/>
</dbReference>
<dbReference type="NCBIfam" id="TIGR00499">
    <property type="entry name" value="lysS_bact"/>
    <property type="match status" value="1"/>
</dbReference>
<dbReference type="NCBIfam" id="NF001756">
    <property type="entry name" value="PRK00484.1"/>
    <property type="match status" value="1"/>
</dbReference>
<dbReference type="PANTHER" id="PTHR42918:SF15">
    <property type="entry name" value="LYSINE--TRNA LIGASE, CHLOROPLASTIC_MITOCHONDRIAL"/>
    <property type="match status" value="1"/>
</dbReference>
<dbReference type="PANTHER" id="PTHR42918">
    <property type="entry name" value="LYSYL-TRNA SYNTHETASE"/>
    <property type="match status" value="1"/>
</dbReference>
<dbReference type="Pfam" id="PF00152">
    <property type="entry name" value="tRNA-synt_2"/>
    <property type="match status" value="1"/>
</dbReference>
<dbReference type="Pfam" id="PF01336">
    <property type="entry name" value="tRNA_anti-codon"/>
    <property type="match status" value="1"/>
</dbReference>
<dbReference type="PRINTS" id="PR00982">
    <property type="entry name" value="TRNASYNTHLYS"/>
</dbReference>
<dbReference type="SUPFAM" id="SSF55681">
    <property type="entry name" value="Class II aaRS and biotin synthetases"/>
    <property type="match status" value="1"/>
</dbReference>
<dbReference type="SUPFAM" id="SSF50249">
    <property type="entry name" value="Nucleic acid-binding proteins"/>
    <property type="match status" value="1"/>
</dbReference>
<dbReference type="PROSITE" id="PS50862">
    <property type="entry name" value="AA_TRNA_LIGASE_II"/>
    <property type="match status" value="1"/>
</dbReference>
<organism>
    <name type="scientific">Campylobacter jejuni subsp. jejuni serotype O:6 (strain 81116 / NCTC 11828)</name>
    <dbReference type="NCBI Taxonomy" id="407148"/>
    <lineage>
        <taxon>Bacteria</taxon>
        <taxon>Pseudomonadati</taxon>
        <taxon>Campylobacterota</taxon>
        <taxon>Epsilonproteobacteria</taxon>
        <taxon>Campylobacterales</taxon>
        <taxon>Campylobacteraceae</taxon>
        <taxon>Campylobacter</taxon>
    </lineage>
</organism>
<sequence length="501" mass="57830">MFDNILEQQRIEKAKELKNLGINPYPHFLEKEMSLKTFKDKFSYILEQVEKRDESVNAVVAGRLKLLRIAGKSIFANIEDEDTNLQIYFNKDSVGEELYAILKKNLEVGDIVLVKGFPFVTKTGEFSLHASEVKLATKAIVPLPEKYHGLTDIEQRYRKRYVDMIMNAEVRKDFLVRSKVVSLIRHFFENKGFLEVETPMMHPIAGGANAKPFVTFHNSLGVERFLRIAPELYLKRLVVGGFEAVFEINRCFRNEGMDLTHNPEFTTIEFYWAYHNYKDLMDLTEELFALLLDKLNLGKTIEFDGKMIDFSKPFERITYKDALCKYGGLDRDLIEDKEKILTKLKVDGFEANEKLELGHLQAELFDNYVEEKLINPTFVIDFPISISPLSRRSDEDSQIAERFELFICGRELANGFNELNDPLDQYERFLKQIEAKNAGDEEACEMDEDFVNALGYGMPPTAGQGIGIDRLVMLLTNKKSIRDVILFPAMRPLKSELKEKE</sequence>
<keyword id="KW-0030">Aminoacyl-tRNA synthetase</keyword>
<keyword id="KW-0067">ATP-binding</keyword>
<keyword id="KW-0963">Cytoplasm</keyword>
<keyword id="KW-0436">Ligase</keyword>
<keyword id="KW-0460">Magnesium</keyword>
<keyword id="KW-0479">Metal-binding</keyword>
<keyword id="KW-0547">Nucleotide-binding</keyword>
<keyword id="KW-0648">Protein biosynthesis</keyword>
<proteinExistence type="inferred from homology"/>
<name>SYK_CAMJ8</name>
<gene>
    <name evidence="1" type="primary">lysS</name>
    <name type="ordered locus">C8J_0376</name>
</gene>
<comment type="catalytic activity">
    <reaction evidence="1">
        <text>tRNA(Lys) + L-lysine + ATP = L-lysyl-tRNA(Lys) + AMP + diphosphate</text>
        <dbReference type="Rhea" id="RHEA:20792"/>
        <dbReference type="Rhea" id="RHEA-COMP:9696"/>
        <dbReference type="Rhea" id="RHEA-COMP:9697"/>
        <dbReference type="ChEBI" id="CHEBI:30616"/>
        <dbReference type="ChEBI" id="CHEBI:32551"/>
        <dbReference type="ChEBI" id="CHEBI:33019"/>
        <dbReference type="ChEBI" id="CHEBI:78442"/>
        <dbReference type="ChEBI" id="CHEBI:78529"/>
        <dbReference type="ChEBI" id="CHEBI:456215"/>
        <dbReference type="EC" id="6.1.1.6"/>
    </reaction>
</comment>
<comment type="cofactor">
    <cofactor evidence="1">
        <name>Mg(2+)</name>
        <dbReference type="ChEBI" id="CHEBI:18420"/>
    </cofactor>
    <text evidence="1">Binds 3 Mg(2+) ions per subunit.</text>
</comment>
<comment type="subunit">
    <text evidence="1">Homodimer.</text>
</comment>
<comment type="subcellular location">
    <subcellularLocation>
        <location evidence="1">Cytoplasm</location>
    </subcellularLocation>
</comment>
<comment type="similarity">
    <text evidence="1">Belongs to the class-II aminoacyl-tRNA synthetase family.</text>
</comment>
<protein>
    <recommendedName>
        <fullName evidence="1">Lysine--tRNA ligase</fullName>
        <ecNumber evidence="1">6.1.1.6</ecNumber>
    </recommendedName>
    <alternativeName>
        <fullName evidence="1">Lysyl-tRNA synthetase</fullName>
        <shortName evidence="1">LysRS</shortName>
    </alternativeName>
</protein>
<reference key="1">
    <citation type="journal article" date="2007" name="J. Bacteriol.">
        <title>The complete genome sequence of Campylobacter jejuni strain 81116 (NCTC11828).</title>
        <authorList>
            <person name="Pearson B.M."/>
            <person name="Gaskin D.J.H."/>
            <person name="Segers R.P.A.M."/>
            <person name="Wells J.M."/>
            <person name="Nuijten P.J.M."/>
            <person name="van Vliet A.H.M."/>
        </authorList>
    </citation>
    <scope>NUCLEOTIDE SEQUENCE [LARGE SCALE GENOMIC DNA]</scope>
    <source>
        <strain>81116 / NCTC 11828</strain>
    </source>
</reference>
<evidence type="ECO:0000255" key="1">
    <source>
        <dbReference type="HAMAP-Rule" id="MF_00252"/>
    </source>
</evidence>